<keyword id="KW-0007">Acetylation</keyword>
<keyword id="KW-0025">Alternative splicing</keyword>
<keyword id="KW-0158">Chromosome</keyword>
<keyword id="KW-1017">Isopeptide bond</keyword>
<keyword id="KW-0597">Phosphoprotein</keyword>
<keyword id="KW-1267">Proteomics identification</keyword>
<keyword id="KW-1185">Reference proteome</keyword>
<keyword id="KW-0832">Ubl conjugation</keyword>
<sequence>MNFLSTAESRTAQAAASGTTLLPQFRAPSWQTGMHSSAATELFATGPLPSTGTLPPSLSAYQHPTTFSNRNFATTSPLVLQDSTFNTTSNGILSHHDPLLQIKTSQGTVPTALAFERLGSSVLSNSIPPQSSTYRSAQESAPHLLQPQFSLLPSALGGSQQTPQAYSSTLFTSSTASIERALLRECSVIKHHQRPSGTQSIQAQLTGSQHSLHSYLSNSSVVNFQETTRQSSLSCSPIGDSTQVSNGGLQQKTSQVSVELAQSYSSAIPSSGYPPSTTKIKSCSTEQPLTSTKTPKPQSIIPPVQTLSYSKPLHNQSSVISGQAQIYSTAQLPSLLSVSQSQNYGLVQPHNVPSIVHSQVYRSSKVEKLPPLYKTLTFSGSSQTVTPENQTLNYSSNQQEVLSSVTNENYPAQTRDLSSVSQSQSYSSGHSQGLSPVSQTQVSYSSQSQVLSVVSLSESYASGESLTLTAPSLSYSSASRAQNLPDSSPTQNYISMHSSQNVQTQESSSPQSQKFLPAVQSSSFASSTHCQTLQNNITSPDPKSYAERKLDSDVYPSSKQEDGFPMQELQVLQPQASLESSTQRLSDGEINAQESTYKVSKADDRYSQSVIRSNSRLEDQVIGVALQASKKEESVVGSVTQLNQQIGQVNNAATLDLKNSTNLIQTPQIRLNTKDLKQQHPLILKVHESKVQEQHDQIINASSQIQIPNHALGHGHQASLPNTQVLLDSACDLQILQQSILQAGLGQVKASLQAQRVQSPQQIVHPFLQMEGHVIQSNGDHSQQQLHPQNSEVMKMDLSESSKPLQQHLTTKGHFSETNQHDSKNQFVSLGSMCFPEAVLLSDERNILSNVDDILAATAAACGVTPTDFSKSTSNETMQAVEDGDSKSHFQQSLDVRHVTSDFNSMTATVGKPQNINDTSLNGNQVTVNLSPVPALQSKMTLDQQHIETPGQNIPTKVTSAVVGPSHEVQEQSSGPFKKQSATNLESEEDSEAPVDSTLNNNRNQEFVSSSRSISGENATSESEFTLGGDDSGVSMNPARSALALLAMAQSGDAVSVKIEEENQDLMHFNLQKKRAKGKGQVKEEDNSNQKQLKRPAQGKRQNPRGTDIYLPYTPPSSESCHDGYQHQEKMRQKIKEVEEKQPEVKTGFIASFLDFLKSGPKQQFSTLAVRMPNRTRRPGTQMVRTFCPPPLPKPSSTTPTPLVSETGGNSPSDKVDNELKNLEHLSSFSSDEDDPGYSQDAYKSVSTPLTTLDATSDKKKKTEALQVATTSPTANTTGTATTSSTTVGAVKQEPLHSTSYAVNILENISSSESSKPIELDGLPSDQFAKGQDTVAIEGFTDEEDTESGGEGQYRERDEFVVKIEDIETFKEALKTGKEPPAIWKVQKALLQKFVPEIRDGQREFAATNSYLGYFGDAKSKYKRIYVKFIENANKKEYVRVCSKKPRNKPSQTIRTVQAKPSSSSKTSDPLASKTTTTKAPSVKPKVKQPKVKAEPPPKKRKKWKEEFSSSQSDSSPEIHTSSSDDEEFEPPAPFVTRFLNTRAMKETFKSYMELLVSIALDPDTMQALEKSNDELLLPHMKKIDGMLNDNRKRLLLNLHLDQSFKNALESFPELTIITRDSKAKSGGTAISKIKMNGKAYNKKTLRTSKTTTKSAQEFAVDPEKIQLYSLYHSLHHYKYHVYLICKDEISSVQKKNEDLGQEEIVQLCMKNVKWVEDLFEKFGELLNHVQQKCS</sequence>
<protein>
    <recommendedName>
        <fullName>Glutamine and serine-rich protein 1</fullName>
    </recommendedName>
</protein>
<evidence type="ECO:0000256" key="1">
    <source>
        <dbReference type="SAM" id="MobiDB-lite"/>
    </source>
</evidence>
<evidence type="ECO:0000269" key="2">
    <source>
    </source>
</evidence>
<evidence type="ECO:0000269" key="3">
    <source>
    </source>
</evidence>
<evidence type="ECO:0000269" key="4">
    <source>
    </source>
</evidence>
<evidence type="ECO:0000303" key="5">
    <source>
    </source>
</evidence>
<evidence type="ECO:0000305" key="6"/>
<evidence type="ECO:0007744" key="7">
    <source>
    </source>
</evidence>
<evidence type="ECO:0007744" key="8">
    <source>
    </source>
</evidence>
<evidence type="ECO:0007744" key="9">
    <source>
    </source>
</evidence>
<evidence type="ECO:0007744" key="10">
    <source>
    </source>
</evidence>
<evidence type="ECO:0007744" key="11">
    <source>
    </source>
</evidence>
<evidence type="ECO:0007744" key="12">
    <source>
    </source>
</evidence>
<evidence type="ECO:0007744" key="13">
    <source>
    </source>
</evidence>
<name>QSER1_HUMAN</name>
<gene>
    <name type="primary">QSER1</name>
</gene>
<proteinExistence type="evidence at protein level"/>
<comment type="function">
    <text evidence="4">Plays an essential role in the protection and maintenance of transcriptional and developmental programs. Protects many bivalent promoters and poised enhancers from hypermethylation, showing a marked preference for these regulatory elements over other types of promoters or enhancers. Mechanistically, cooperates with TET1 and binds to DNA in a common complex to inhibit the binding of DNMT3A/3B and therefore de novo methylation.</text>
</comment>
<comment type="subunit">
    <text evidence="4">Interacts with TET1.</text>
</comment>
<comment type="subcellular location">
    <subcellularLocation>
        <location evidence="4">Chromosome</location>
    </subcellularLocation>
</comment>
<comment type="alternative products">
    <event type="alternative splicing"/>
    <isoform>
        <id>Q2KHR3-1</id>
        <name>1</name>
        <sequence type="displayed"/>
    </isoform>
    <isoform>
        <id>Q2KHR3-2</id>
        <name>2</name>
        <sequence type="described" ref="VSP_039815 VSP_039816"/>
    </isoform>
</comment>
<comment type="sequence caution" evidence="6">
    <conflict type="miscellaneous discrepancy">
        <sequence resource="EMBL-CDS" id="AAI12936"/>
    </conflict>
    <text>Contaminating sequence. Potential poly-A sequence.</text>
</comment>
<comment type="sequence caution" evidence="6">
    <conflict type="erroneous termination">
        <sequence resource="EMBL-CDS" id="BAC86397"/>
    </conflict>
    <text>Truncated C-terminus.</text>
</comment>
<reference key="1">
    <citation type="journal article" date="2004" name="Nat. Genet.">
        <title>Complete sequencing and characterization of 21,243 full-length human cDNAs.</title>
        <authorList>
            <person name="Ota T."/>
            <person name="Suzuki Y."/>
            <person name="Nishikawa T."/>
            <person name="Otsuki T."/>
            <person name="Sugiyama T."/>
            <person name="Irie R."/>
            <person name="Wakamatsu A."/>
            <person name="Hayashi K."/>
            <person name="Sato H."/>
            <person name="Nagai K."/>
            <person name="Kimura K."/>
            <person name="Makita H."/>
            <person name="Sekine M."/>
            <person name="Obayashi M."/>
            <person name="Nishi T."/>
            <person name="Shibahara T."/>
            <person name="Tanaka T."/>
            <person name="Ishii S."/>
            <person name="Yamamoto J."/>
            <person name="Saito K."/>
            <person name="Kawai Y."/>
            <person name="Isono Y."/>
            <person name="Nakamura Y."/>
            <person name="Nagahari K."/>
            <person name="Murakami K."/>
            <person name="Yasuda T."/>
            <person name="Iwayanagi T."/>
            <person name="Wagatsuma M."/>
            <person name="Shiratori A."/>
            <person name="Sudo H."/>
            <person name="Hosoiri T."/>
            <person name="Kaku Y."/>
            <person name="Kodaira H."/>
            <person name="Kondo H."/>
            <person name="Sugawara M."/>
            <person name="Takahashi M."/>
            <person name="Kanda K."/>
            <person name="Yokoi T."/>
            <person name="Furuya T."/>
            <person name="Kikkawa E."/>
            <person name="Omura Y."/>
            <person name="Abe K."/>
            <person name="Kamihara K."/>
            <person name="Katsuta N."/>
            <person name="Sato K."/>
            <person name="Tanikawa M."/>
            <person name="Yamazaki M."/>
            <person name="Ninomiya K."/>
            <person name="Ishibashi T."/>
            <person name="Yamashita H."/>
            <person name="Murakawa K."/>
            <person name="Fujimori K."/>
            <person name="Tanai H."/>
            <person name="Kimata M."/>
            <person name="Watanabe M."/>
            <person name="Hiraoka S."/>
            <person name="Chiba Y."/>
            <person name="Ishida S."/>
            <person name="Ono Y."/>
            <person name="Takiguchi S."/>
            <person name="Watanabe S."/>
            <person name="Yosida M."/>
            <person name="Hotuta T."/>
            <person name="Kusano J."/>
            <person name="Kanehori K."/>
            <person name="Takahashi-Fujii A."/>
            <person name="Hara H."/>
            <person name="Tanase T.-O."/>
            <person name="Nomura Y."/>
            <person name="Togiya S."/>
            <person name="Komai F."/>
            <person name="Hara R."/>
            <person name="Takeuchi K."/>
            <person name="Arita M."/>
            <person name="Imose N."/>
            <person name="Musashino K."/>
            <person name="Yuuki H."/>
            <person name="Oshima A."/>
            <person name="Sasaki N."/>
            <person name="Aotsuka S."/>
            <person name="Yoshikawa Y."/>
            <person name="Matsunawa H."/>
            <person name="Ichihara T."/>
            <person name="Shiohata N."/>
            <person name="Sano S."/>
            <person name="Moriya S."/>
            <person name="Momiyama H."/>
            <person name="Satoh N."/>
            <person name="Takami S."/>
            <person name="Terashima Y."/>
            <person name="Suzuki O."/>
            <person name="Nakagawa S."/>
            <person name="Senoh A."/>
            <person name="Mizoguchi H."/>
            <person name="Goto Y."/>
            <person name="Shimizu F."/>
            <person name="Wakebe H."/>
            <person name="Hishigaki H."/>
            <person name="Watanabe T."/>
            <person name="Sugiyama A."/>
            <person name="Takemoto M."/>
            <person name="Kawakami B."/>
            <person name="Yamazaki M."/>
            <person name="Watanabe K."/>
            <person name="Kumagai A."/>
            <person name="Itakura S."/>
            <person name="Fukuzumi Y."/>
            <person name="Fujimori Y."/>
            <person name="Komiyama M."/>
            <person name="Tashiro H."/>
            <person name="Tanigami A."/>
            <person name="Fujiwara T."/>
            <person name="Ono T."/>
            <person name="Yamada K."/>
            <person name="Fujii Y."/>
            <person name="Ozaki K."/>
            <person name="Hirao M."/>
            <person name="Ohmori Y."/>
            <person name="Kawabata A."/>
            <person name="Hikiji T."/>
            <person name="Kobatake N."/>
            <person name="Inagaki H."/>
            <person name="Ikema Y."/>
            <person name="Okamoto S."/>
            <person name="Okitani R."/>
            <person name="Kawakami T."/>
            <person name="Noguchi S."/>
            <person name="Itoh T."/>
            <person name="Shigeta K."/>
            <person name="Senba T."/>
            <person name="Matsumura K."/>
            <person name="Nakajima Y."/>
            <person name="Mizuno T."/>
            <person name="Morinaga M."/>
            <person name="Sasaki M."/>
            <person name="Togashi T."/>
            <person name="Oyama M."/>
            <person name="Hata H."/>
            <person name="Watanabe M."/>
            <person name="Komatsu T."/>
            <person name="Mizushima-Sugano J."/>
            <person name="Satoh T."/>
            <person name="Shirai Y."/>
            <person name="Takahashi Y."/>
            <person name="Nakagawa K."/>
            <person name="Okumura K."/>
            <person name="Nagase T."/>
            <person name="Nomura N."/>
            <person name="Kikuchi H."/>
            <person name="Masuho Y."/>
            <person name="Yamashita R."/>
            <person name="Nakai K."/>
            <person name="Yada T."/>
            <person name="Nakamura Y."/>
            <person name="Ohara O."/>
            <person name="Isogai T."/>
            <person name="Sugano S."/>
        </authorList>
    </citation>
    <scope>NUCLEOTIDE SEQUENCE [LARGE SCALE MRNA] (ISOFORM 2)</scope>
    <scope>NUCLEOTIDE SEQUENCE [LARGE SCALE MRNA] OF 82-1258 (ISOFORM 1)</scope>
    <scope>VARIANTS ILE-385 AND SER-1018</scope>
    <source>
        <tissue>Brain</tissue>
        <tissue>Testis</tissue>
    </source>
</reference>
<reference key="2">
    <citation type="journal article" date="2006" name="Nature">
        <title>Human chromosome 11 DNA sequence and analysis including novel gene identification.</title>
        <authorList>
            <person name="Taylor T.D."/>
            <person name="Noguchi H."/>
            <person name="Totoki Y."/>
            <person name="Toyoda A."/>
            <person name="Kuroki Y."/>
            <person name="Dewar K."/>
            <person name="Lloyd C."/>
            <person name="Itoh T."/>
            <person name="Takeda T."/>
            <person name="Kim D.-W."/>
            <person name="She X."/>
            <person name="Barlow K.F."/>
            <person name="Bloom T."/>
            <person name="Bruford E."/>
            <person name="Chang J.L."/>
            <person name="Cuomo C.A."/>
            <person name="Eichler E."/>
            <person name="FitzGerald M.G."/>
            <person name="Jaffe D.B."/>
            <person name="LaButti K."/>
            <person name="Nicol R."/>
            <person name="Park H.-S."/>
            <person name="Seaman C."/>
            <person name="Sougnez C."/>
            <person name="Yang X."/>
            <person name="Zimmer A.R."/>
            <person name="Zody M.C."/>
            <person name="Birren B.W."/>
            <person name="Nusbaum C."/>
            <person name="Fujiyama A."/>
            <person name="Hattori M."/>
            <person name="Rogers J."/>
            <person name="Lander E.S."/>
            <person name="Sakaki Y."/>
        </authorList>
    </citation>
    <scope>NUCLEOTIDE SEQUENCE [LARGE SCALE GENOMIC DNA]</scope>
</reference>
<reference key="3">
    <citation type="journal article" date="2004" name="Genome Res.">
        <title>The status, quality, and expansion of the NIH full-length cDNA project: the Mammalian Gene Collection (MGC).</title>
        <authorList>
            <consortium name="The MGC Project Team"/>
        </authorList>
    </citation>
    <scope>NUCLEOTIDE SEQUENCE [LARGE SCALE MRNA] OF 1-1696 (ISOFORM 1)</scope>
    <scope>VARIANTS ILE-385 AND SER-1018</scope>
    <source>
        <tissue>Uterus</tissue>
    </source>
</reference>
<reference key="4">
    <citation type="journal article" date="2007" name="Science">
        <title>ATM and ATR substrate analysis reveals extensive protein networks responsive to DNA damage.</title>
        <authorList>
            <person name="Matsuoka S."/>
            <person name="Ballif B.A."/>
            <person name="Smogorzewska A."/>
            <person name="McDonald E.R. III"/>
            <person name="Hurov K.E."/>
            <person name="Luo J."/>
            <person name="Bakalarski C.E."/>
            <person name="Zhao Z."/>
            <person name="Solimini N."/>
            <person name="Lerenthal Y."/>
            <person name="Shiloh Y."/>
            <person name="Gygi S.P."/>
            <person name="Elledge S.J."/>
        </authorList>
    </citation>
    <scope>PHOSPHORYLATION [LARGE SCALE ANALYSIS] AT SER-1239</scope>
    <scope>IDENTIFICATION BY MASS SPECTROMETRY [LARGE SCALE ANALYSIS]</scope>
    <source>
        <tissue>Embryonic kidney</tissue>
    </source>
</reference>
<reference key="5">
    <citation type="journal article" date="2008" name="Proc. Natl. Acad. Sci. U.S.A.">
        <title>A quantitative atlas of mitotic phosphorylation.</title>
        <authorList>
            <person name="Dephoure N."/>
            <person name="Zhou C."/>
            <person name="Villen J."/>
            <person name="Beausoleil S.A."/>
            <person name="Bakalarski C.E."/>
            <person name="Elledge S.J."/>
            <person name="Gygi S.P."/>
        </authorList>
    </citation>
    <scope>PHOSPHORYLATION [LARGE SCALE ANALYSIS] AT THR-949; SER-1230; SER-1231; THR-1341 AND SER-1348</scope>
    <scope>IDENTIFICATION BY MASS SPECTROMETRY [LARGE SCALE ANALYSIS]</scope>
    <source>
        <tissue>Cervix carcinoma</tissue>
    </source>
</reference>
<reference key="6">
    <citation type="journal article" date="2009" name="Anal. Chem.">
        <title>Lys-N and trypsin cover complementary parts of the phosphoproteome in a refined SCX-based approach.</title>
        <authorList>
            <person name="Gauci S."/>
            <person name="Helbig A.O."/>
            <person name="Slijper M."/>
            <person name="Krijgsveld J."/>
            <person name="Heck A.J."/>
            <person name="Mohammed S."/>
        </authorList>
    </citation>
    <scope>IDENTIFICATION BY MASS SPECTROMETRY [LARGE SCALE ANALYSIS]</scope>
</reference>
<reference key="7">
    <citation type="journal article" date="2009" name="Sci. Signal.">
        <title>Quantitative phosphoproteomic analysis of T cell receptor signaling reveals system-wide modulation of protein-protein interactions.</title>
        <authorList>
            <person name="Mayya V."/>
            <person name="Lundgren D.H."/>
            <person name="Hwang S.-I."/>
            <person name="Rezaul K."/>
            <person name="Wu L."/>
            <person name="Eng J.K."/>
            <person name="Rodionov V."/>
            <person name="Han D.K."/>
        </authorList>
    </citation>
    <scope>PHOSPHORYLATION [LARGE SCALE ANALYSIS] AT THR-1341</scope>
    <scope>IDENTIFICATION BY MASS SPECTROMETRY [LARGE SCALE ANALYSIS]</scope>
    <source>
        <tissue>Leukemic T-cell</tissue>
    </source>
</reference>
<reference key="8">
    <citation type="journal article" date="2010" name="Sci. Signal.">
        <title>Quantitative phosphoproteomics reveals widespread full phosphorylation site occupancy during mitosis.</title>
        <authorList>
            <person name="Olsen J.V."/>
            <person name="Vermeulen M."/>
            <person name="Santamaria A."/>
            <person name="Kumar C."/>
            <person name="Miller M.L."/>
            <person name="Jensen L.J."/>
            <person name="Gnad F."/>
            <person name="Cox J."/>
            <person name="Jensen T.S."/>
            <person name="Nigg E.A."/>
            <person name="Brunak S."/>
            <person name="Mann M."/>
        </authorList>
    </citation>
    <scope>IDENTIFICATION BY MASS SPECTROMETRY [LARGE SCALE ANALYSIS]</scope>
    <source>
        <tissue>Cervix carcinoma</tissue>
    </source>
</reference>
<reference key="9">
    <citation type="journal article" date="2011" name="BMC Syst. Biol.">
        <title>Initial characterization of the human central proteome.</title>
        <authorList>
            <person name="Burkard T.R."/>
            <person name="Planyavsky M."/>
            <person name="Kaupe I."/>
            <person name="Breitwieser F.P."/>
            <person name="Buerckstuemmer T."/>
            <person name="Bennett K.L."/>
            <person name="Superti-Furga G."/>
            <person name="Colinge J."/>
        </authorList>
    </citation>
    <scope>IDENTIFICATION BY MASS SPECTROMETRY [LARGE SCALE ANALYSIS]</scope>
</reference>
<reference key="10">
    <citation type="journal article" date="2011" name="Sci. Signal.">
        <title>System-wide temporal characterization of the proteome and phosphoproteome of human embryonic stem cell differentiation.</title>
        <authorList>
            <person name="Rigbolt K.T."/>
            <person name="Prokhorova T.A."/>
            <person name="Akimov V."/>
            <person name="Henningsen J."/>
            <person name="Johansen P.T."/>
            <person name="Kratchmarova I."/>
            <person name="Kassem M."/>
            <person name="Mann M."/>
            <person name="Olsen J.V."/>
            <person name="Blagoev B."/>
        </authorList>
    </citation>
    <scope>PHOSPHORYLATION [LARGE SCALE ANALYSIS] AT SER-1211; SER-1230; SER-1231; THR-1341 AND SER-1348</scope>
    <scope>IDENTIFICATION BY MASS SPECTROMETRY [LARGE SCALE ANALYSIS]</scope>
</reference>
<reference key="11">
    <citation type="journal article" date="2012" name="Proc. Natl. Acad. Sci. U.S.A.">
        <title>N-terminal acetylome analyses and functional insights of the N-terminal acetyltransferase NatB.</title>
        <authorList>
            <person name="Van Damme P."/>
            <person name="Lasa M."/>
            <person name="Polevoda B."/>
            <person name="Gazquez C."/>
            <person name="Elosegui-Artola A."/>
            <person name="Kim D.S."/>
            <person name="De Juan-Pardo E."/>
            <person name="Demeyer K."/>
            <person name="Hole K."/>
            <person name="Larrea E."/>
            <person name="Timmerman E."/>
            <person name="Prieto J."/>
            <person name="Arnesen T."/>
            <person name="Sherman F."/>
            <person name="Gevaert K."/>
            <person name="Aldabe R."/>
        </authorList>
    </citation>
    <scope>ACETYLATION [LARGE SCALE ANALYSIS] AT MET-1</scope>
    <scope>IDENTIFICATION BY MASS SPECTROMETRY [LARGE SCALE ANALYSIS]</scope>
</reference>
<reference key="12">
    <citation type="journal article" date="2013" name="J. Proteome Res.">
        <title>Toward a comprehensive characterization of a human cancer cell phosphoproteome.</title>
        <authorList>
            <person name="Zhou H."/>
            <person name="Di Palma S."/>
            <person name="Preisinger C."/>
            <person name="Peng M."/>
            <person name="Polat A.N."/>
            <person name="Heck A.J."/>
            <person name="Mohammed S."/>
        </authorList>
    </citation>
    <scope>PHOSPHORYLATION [LARGE SCALE ANALYSIS] AT SER-586; SER-615; SER-886 AND SER-987</scope>
    <scope>VARIANT [LARGE SCALE ANALYSIS] SER-1018</scope>
    <scope>IDENTIFICATION BY MASS SPECTROMETRY [LARGE SCALE ANALYSIS]</scope>
    <source>
        <tissue>Cervix carcinoma</tissue>
        <tissue>Erythroleukemia</tissue>
    </source>
</reference>
<reference key="13">
    <citation type="journal article" date="2014" name="J. Proteomics">
        <title>An enzyme assisted RP-RPLC approach for in-depth analysis of human liver phosphoproteome.</title>
        <authorList>
            <person name="Bian Y."/>
            <person name="Song C."/>
            <person name="Cheng K."/>
            <person name="Dong M."/>
            <person name="Wang F."/>
            <person name="Huang J."/>
            <person name="Sun D."/>
            <person name="Wang L."/>
            <person name="Ye M."/>
            <person name="Zou H."/>
        </authorList>
    </citation>
    <scope>IDENTIFICATION BY MASS SPECTROMETRY [LARGE SCALE ANALYSIS]</scope>
    <source>
        <tissue>Liver</tissue>
    </source>
</reference>
<reference key="14">
    <citation type="journal article" date="2017" name="Nat. Struct. Mol. Biol.">
        <title>Site-specific mapping of the human SUMO proteome reveals co-modification with phosphorylation.</title>
        <authorList>
            <person name="Hendriks I.A."/>
            <person name="Lyon D."/>
            <person name="Young C."/>
            <person name="Jensen L.J."/>
            <person name="Vertegaal A.C."/>
            <person name="Nielsen M.L."/>
        </authorList>
    </citation>
    <scope>SUMOYLATION [LARGE SCALE ANALYSIS] AT LYS-1058 AND LYS-1083</scope>
    <scope>IDENTIFICATION BY MASS SPECTROMETRY [LARGE SCALE ANALYSIS]</scope>
</reference>
<reference key="15">
    <citation type="journal article" date="2021" name="Science">
        <title>QSER1 protects DNA methylation valleys from de novo methylation.</title>
        <authorList>
            <person name="Dixon G."/>
            <person name="Pan H."/>
            <person name="Yang D."/>
            <person name="Rosen B.P."/>
            <person name="Jashari T."/>
            <person name="Verma N."/>
            <person name="Pulecio J."/>
            <person name="Caspi I."/>
            <person name="Lee K."/>
            <person name="Stransky S."/>
            <person name="Glezer A."/>
            <person name="Liu C."/>
            <person name="Rivas M."/>
            <person name="Kumar R."/>
            <person name="Lan Y."/>
            <person name="Torregroza I."/>
            <person name="He C."/>
            <person name="Sidoli S."/>
            <person name="Evans T."/>
            <person name="Elemento O."/>
            <person name="Huangfu D."/>
        </authorList>
    </citation>
    <scope>FUNCTION</scope>
    <scope>INTERACTION WITH TET1</scope>
    <scope>SUBCELLULAR LOCATION</scope>
</reference>
<dbReference type="EMBL" id="AK125391">
    <property type="status" value="NOT_ANNOTATED_CDS"/>
    <property type="molecule type" value="mRNA"/>
</dbReference>
<dbReference type="EMBL" id="AK126023">
    <property type="protein sequence ID" value="BAC86397.1"/>
    <property type="status" value="ALT_SEQ"/>
    <property type="molecule type" value="mRNA"/>
</dbReference>
<dbReference type="EMBL" id="AC107939">
    <property type="status" value="NOT_ANNOTATED_CDS"/>
    <property type="molecule type" value="Genomic_DNA"/>
</dbReference>
<dbReference type="EMBL" id="BC112935">
    <property type="protein sequence ID" value="AAI12936.1"/>
    <property type="status" value="ALT_SEQ"/>
    <property type="molecule type" value="mRNA"/>
</dbReference>
<dbReference type="RefSeq" id="NP_001070254.1">
    <property type="nucleotide sequence ID" value="NM_001076786.2"/>
</dbReference>
<dbReference type="SMR" id="Q2KHR3"/>
<dbReference type="BioGRID" id="122924">
    <property type="interactions" value="108"/>
</dbReference>
<dbReference type="FunCoup" id="Q2KHR3">
    <property type="interactions" value="2335"/>
</dbReference>
<dbReference type="IntAct" id="Q2KHR3">
    <property type="interactions" value="77"/>
</dbReference>
<dbReference type="MINT" id="Q2KHR3"/>
<dbReference type="STRING" id="9606.ENSP00000382241"/>
<dbReference type="GlyConnect" id="2855">
    <property type="glycosylation" value="1 O-GlcNAc glycan (2 sites)"/>
</dbReference>
<dbReference type="GlyCosmos" id="Q2KHR3">
    <property type="glycosylation" value="10 sites, 1 glycan"/>
</dbReference>
<dbReference type="GlyGen" id="Q2KHR3">
    <property type="glycosylation" value="38 sites, 2 O-linked glycans (38 sites)"/>
</dbReference>
<dbReference type="iPTMnet" id="Q2KHR3"/>
<dbReference type="PhosphoSitePlus" id="Q2KHR3"/>
<dbReference type="BioMuta" id="QSER1"/>
<dbReference type="DMDM" id="308153569"/>
<dbReference type="jPOST" id="Q2KHR3"/>
<dbReference type="MassIVE" id="Q2KHR3"/>
<dbReference type="PaxDb" id="9606-ENSP00000382241"/>
<dbReference type="PeptideAtlas" id="Q2KHR3"/>
<dbReference type="ProteomicsDB" id="61307">
    <molecule id="Q2KHR3-1"/>
</dbReference>
<dbReference type="ProteomicsDB" id="61308">
    <molecule id="Q2KHR3-2"/>
</dbReference>
<dbReference type="Pumba" id="Q2KHR3"/>
<dbReference type="Antibodypedia" id="1555">
    <property type="antibodies" value="69 antibodies from 20 providers"/>
</dbReference>
<dbReference type="DNASU" id="79832"/>
<dbReference type="GeneID" id="79832"/>
<dbReference type="KEGG" id="hsa:79832"/>
<dbReference type="UCSC" id="uc001mty.4">
    <molecule id="Q2KHR3-1"/>
    <property type="organism name" value="human"/>
</dbReference>
<dbReference type="AGR" id="HGNC:26154"/>
<dbReference type="CTD" id="79832"/>
<dbReference type="DisGeNET" id="79832"/>
<dbReference type="GeneCards" id="QSER1"/>
<dbReference type="HGNC" id="HGNC:26154">
    <property type="gene designation" value="QSER1"/>
</dbReference>
<dbReference type="MIM" id="619440">
    <property type="type" value="gene"/>
</dbReference>
<dbReference type="neXtProt" id="NX_Q2KHR3"/>
<dbReference type="PharmGKB" id="PA143485589"/>
<dbReference type="VEuPathDB" id="HostDB:ENSG00000060749"/>
<dbReference type="eggNOG" id="KOG4805">
    <property type="taxonomic scope" value="Eukaryota"/>
</dbReference>
<dbReference type="HOGENOM" id="CLU_000708_2_0_1"/>
<dbReference type="InParanoid" id="Q2KHR3"/>
<dbReference type="OrthoDB" id="8447576at2759"/>
<dbReference type="PAN-GO" id="Q2KHR3">
    <property type="GO annotations" value="0 GO annotations based on evolutionary models"/>
</dbReference>
<dbReference type="PhylomeDB" id="Q2KHR3"/>
<dbReference type="TreeFam" id="TF333141"/>
<dbReference type="PathwayCommons" id="Q2KHR3"/>
<dbReference type="SignaLink" id="Q2KHR3"/>
<dbReference type="BioGRID-ORCS" id="79832">
    <property type="hits" value="10 hits in 1158 CRISPR screens"/>
</dbReference>
<dbReference type="ChiTaRS" id="QSER1">
    <property type="organism name" value="human"/>
</dbReference>
<dbReference type="GenomeRNAi" id="79832"/>
<dbReference type="Pharos" id="Q2KHR3">
    <property type="development level" value="Tdark"/>
</dbReference>
<dbReference type="PRO" id="PR:Q2KHR3"/>
<dbReference type="Proteomes" id="UP000005640">
    <property type="component" value="Chromosome 11"/>
</dbReference>
<dbReference type="RNAct" id="Q2KHR3">
    <property type="molecule type" value="protein"/>
</dbReference>
<dbReference type="Bgee" id="ENSG00000060749">
    <property type="expression patterns" value="Expressed in caput epididymis and 192 other cell types or tissues"/>
</dbReference>
<dbReference type="ExpressionAtlas" id="Q2KHR3">
    <property type="expression patterns" value="baseline and differential"/>
</dbReference>
<dbReference type="GO" id="GO:0005694">
    <property type="term" value="C:chromosome"/>
    <property type="evidence" value="ECO:0007669"/>
    <property type="project" value="UniProtKB-SubCell"/>
</dbReference>
<dbReference type="InterPro" id="IPR052466">
    <property type="entry name" value="DNA_MethProtect_Complex"/>
</dbReference>
<dbReference type="InterPro" id="IPR025451">
    <property type="entry name" value="DUF4211"/>
</dbReference>
<dbReference type="PANTHER" id="PTHR14709:SF2">
    <property type="entry name" value="GLUTAMINE AND SERINE-RICH PROTEIN 1"/>
    <property type="match status" value="1"/>
</dbReference>
<dbReference type="PANTHER" id="PTHR14709">
    <property type="entry name" value="GLUTAMINE AND SERINE-RICH PROTEIN 1-RELATED"/>
    <property type="match status" value="1"/>
</dbReference>
<dbReference type="Pfam" id="PF13926">
    <property type="entry name" value="DUF4211"/>
    <property type="match status" value="1"/>
</dbReference>
<organism>
    <name type="scientific">Homo sapiens</name>
    <name type="common">Human</name>
    <dbReference type="NCBI Taxonomy" id="9606"/>
    <lineage>
        <taxon>Eukaryota</taxon>
        <taxon>Metazoa</taxon>
        <taxon>Chordata</taxon>
        <taxon>Craniata</taxon>
        <taxon>Vertebrata</taxon>
        <taxon>Euteleostomi</taxon>
        <taxon>Mammalia</taxon>
        <taxon>Eutheria</taxon>
        <taxon>Euarchontoglires</taxon>
        <taxon>Primates</taxon>
        <taxon>Haplorrhini</taxon>
        <taxon>Catarrhini</taxon>
        <taxon>Hominidae</taxon>
        <taxon>Homo</taxon>
    </lineage>
</organism>
<feature type="chain" id="PRO_0000288933" description="Glutamine and serine-rich protein 1">
    <location>
        <begin position="1"/>
        <end position="1735"/>
    </location>
</feature>
<feature type="region of interest" description="Disordered" evidence="1">
    <location>
        <begin position="267"/>
        <end position="301"/>
    </location>
</feature>
<feature type="region of interest" description="Disordered" evidence="1">
    <location>
        <begin position="414"/>
        <end position="440"/>
    </location>
</feature>
<feature type="region of interest" description="Disordered" evidence="1">
    <location>
        <begin position="479"/>
        <end position="518"/>
    </location>
</feature>
<feature type="region of interest" description="Disordered" evidence="1">
    <location>
        <begin position="533"/>
        <end position="561"/>
    </location>
</feature>
<feature type="region of interest" description="Disordered" evidence="1">
    <location>
        <begin position="964"/>
        <end position="1033"/>
    </location>
</feature>
<feature type="region of interest" description="Disordered" evidence="1">
    <location>
        <begin position="1073"/>
        <end position="1132"/>
    </location>
</feature>
<feature type="region of interest" description="Disordered" evidence="1">
    <location>
        <begin position="1178"/>
        <end position="1217"/>
    </location>
</feature>
<feature type="region of interest" description="Disordered" evidence="1">
    <location>
        <begin position="1256"/>
        <end position="1286"/>
    </location>
</feature>
<feature type="region of interest" description="Disordered" evidence="1">
    <location>
        <begin position="1441"/>
        <end position="1532"/>
    </location>
</feature>
<feature type="compositionally biased region" description="Polar residues" evidence="1">
    <location>
        <begin position="267"/>
        <end position="297"/>
    </location>
</feature>
<feature type="compositionally biased region" description="Low complexity" evidence="1">
    <location>
        <begin position="417"/>
        <end position="440"/>
    </location>
</feature>
<feature type="compositionally biased region" description="Polar residues" evidence="1">
    <location>
        <begin position="971"/>
        <end position="985"/>
    </location>
</feature>
<feature type="compositionally biased region" description="Polar residues" evidence="1">
    <location>
        <begin position="997"/>
        <end position="1024"/>
    </location>
</feature>
<feature type="compositionally biased region" description="Basic and acidic residues" evidence="1">
    <location>
        <begin position="1120"/>
        <end position="1132"/>
    </location>
</feature>
<feature type="compositionally biased region" description="Low complexity" evidence="1">
    <location>
        <begin position="1269"/>
        <end position="1286"/>
    </location>
</feature>
<feature type="compositionally biased region" description="Polar residues" evidence="1">
    <location>
        <begin position="1449"/>
        <end position="1478"/>
    </location>
</feature>
<feature type="compositionally biased region" description="Basic and acidic residues" evidence="1">
    <location>
        <begin position="1492"/>
        <end position="1508"/>
    </location>
</feature>
<feature type="modified residue" description="N-acetylmethionine" evidence="11">
    <location>
        <position position="1"/>
    </location>
</feature>
<feature type="modified residue" description="Phosphoserine" evidence="12">
    <location>
        <position position="586"/>
    </location>
</feature>
<feature type="modified residue" description="Phosphoserine" evidence="12">
    <location>
        <position position="615"/>
    </location>
</feature>
<feature type="modified residue" description="Phosphoserine" evidence="12">
    <location>
        <position position="886"/>
    </location>
</feature>
<feature type="modified residue" description="Phosphothreonine" evidence="8">
    <location>
        <position position="949"/>
    </location>
</feature>
<feature type="modified residue" description="Phosphoserine" evidence="12">
    <location>
        <position position="987"/>
    </location>
</feature>
<feature type="modified residue" description="Phosphoserine" evidence="10">
    <location>
        <position position="1211"/>
    </location>
</feature>
<feature type="modified residue" description="Phosphoserine" evidence="8 10">
    <location>
        <position position="1230"/>
    </location>
</feature>
<feature type="modified residue" description="Phosphoserine" evidence="8 10">
    <location>
        <position position="1231"/>
    </location>
</feature>
<feature type="modified residue" description="Phosphoserine" evidence="7">
    <location>
        <position position="1239"/>
    </location>
</feature>
<feature type="modified residue" description="Phosphothreonine" evidence="8 9 10">
    <location>
        <position position="1341"/>
    </location>
</feature>
<feature type="modified residue" description="Phosphoserine" evidence="8 10">
    <location>
        <position position="1348"/>
    </location>
</feature>
<feature type="cross-link" description="Glycyl lysine isopeptide (Lys-Gly) (interchain with G-Cter in SUMO2)" evidence="13">
    <location>
        <position position="1058"/>
    </location>
</feature>
<feature type="cross-link" description="Glycyl lysine isopeptide (Lys-Gly) (interchain with G-Cter in SUMO2)" evidence="13">
    <location>
        <position position="1083"/>
    </location>
</feature>
<feature type="splice variant" id="VSP_039815" description="In isoform 2." evidence="5">
    <location>
        <begin position="243"/>
        <end position="481"/>
    </location>
</feature>
<feature type="splice variant" id="VSP_039816" description="In isoform 2." evidence="5">
    <original>VQQKCS</original>
    <variation>TGMLGEMQSVSVSSTRRSEQQNILEAGKSKIKVPVSGDC</variation>
    <location>
        <begin position="1730"/>
        <end position="1735"/>
    </location>
</feature>
<feature type="sequence variant" id="VAR_056975" description="In dbSNP:rs1022586." evidence="2 3">
    <original>V</original>
    <variation>I</variation>
    <location>
        <position position="385"/>
    </location>
</feature>
<feature type="sequence variant" id="VAR_032535" description="In dbSNP:rs2297781.">
    <original>Q</original>
    <variation>R</variation>
    <location>
        <position position="644"/>
    </location>
</feature>
<feature type="sequence variant" id="VAR_032536" description="In dbSNP:rs7940077." evidence="2 3 12">
    <original>N</original>
    <variation>S</variation>
    <location>
        <position position="1018"/>
    </location>
</feature>
<feature type="sequence variant" id="VAR_032537" description="In dbSNP:rs16923676.">
    <original>N</original>
    <variation>D</variation>
    <location>
        <position position="1304"/>
    </location>
</feature>
<feature type="sequence conflict" description="In Ref. 1; AK125391." evidence="6" ref="1">
    <original>S</original>
    <variation>P</variation>
    <location>
        <position position="291"/>
    </location>
</feature>
<feature type="sequence conflict" description="In Ref. 1; AK125391." evidence="6" ref="1">
    <original>D</original>
    <variation>N</variation>
    <location>
        <position position="486"/>
    </location>
</feature>
<feature type="sequence conflict" description="In Ref. 1; AK125391." evidence="6" ref="1">
    <original>R</original>
    <variation>G</variation>
    <location>
        <position position="1075"/>
    </location>
</feature>
<feature type="sequence conflict" description="In Ref. 1; AK125391." evidence="6" ref="1">
    <original>S</original>
    <variation>P</variation>
    <location>
        <position position="1247"/>
    </location>
</feature>
<feature type="sequence conflict" description="In Ref. 1; AK125391." evidence="6" ref="1">
    <original>D</original>
    <variation>E</variation>
    <location>
        <position position="1258"/>
    </location>
</feature>
<accession>Q2KHR3</accession>
<accession>Q6ZU30</accession>
<accession>Q6ZUR5</accession>